<organism>
    <name type="scientific">Clostridium perfringens (strain SM101 / Type A)</name>
    <dbReference type="NCBI Taxonomy" id="289380"/>
    <lineage>
        <taxon>Bacteria</taxon>
        <taxon>Bacillati</taxon>
        <taxon>Bacillota</taxon>
        <taxon>Clostridia</taxon>
        <taxon>Eubacteriales</taxon>
        <taxon>Clostridiaceae</taxon>
        <taxon>Clostridium</taxon>
    </lineage>
</organism>
<feature type="chain" id="PRO_1000188058" description="Small ribosomal subunit biogenesis GTPase RsgA">
    <location>
        <begin position="1"/>
        <end position="287"/>
    </location>
</feature>
<feature type="domain" description="CP-type G" evidence="2">
    <location>
        <begin position="61"/>
        <end position="218"/>
    </location>
</feature>
<feature type="binding site" evidence="1">
    <location>
        <begin position="110"/>
        <end position="113"/>
    </location>
    <ligand>
        <name>GTP</name>
        <dbReference type="ChEBI" id="CHEBI:37565"/>
    </ligand>
</feature>
<feature type="binding site" evidence="1">
    <location>
        <begin position="161"/>
        <end position="169"/>
    </location>
    <ligand>
        <name>GTP</name>
        <dbReference type="ChEBI" id="CHEBI:37565"/>
    </ligand>
</feature>
<feature type="binding site" evidence="1">
    <location>
        <position position="242"/>
    </location>
    <ligand>
        <name>Zn(2+)</name>
        <dbReference type="ChEBI" id="CHEBI:29105"/>
    </ligand>
</feature>
<feature type="binding site" evidence="1">
    <location>
        <position position="247"/>
    </location>
    <ligand>
        <name>Zn(2+)</name>
        <dbReference type="ChEBI" id="CHEBI:29105"/>
    </ligand>
</feature>
<feature type="binding site" evidence="1">
    <location>
        <position position="249"/>
    </location>
    <ligand>
        <name>Zn(2+)</name>
        <dbReference type="ChEBI" id="CHEBI:29105"/>
    </ligand>
</feature>
<feature type="binding site" evidence="1">
    <location>
        <position position="255"/>
    </location>
    <ligand>
        <name>Zn(2+)</name>
        <dbReference type="ChEBI" id="CHEBI:29105"/>
    </ligand>
</feature>
<keyword id="KW-0963">Cytoplasm</keyword>
<keyword id="KW-0342">GTP-binding</keyword>
<keyword id="KW-0378">Hydrolase</keyword>
<keyword id="KW-0479">Metal-binding</keyword>
<keyword id="KW-0547">Nucleotide-binding</keyword>
<keyword id="KW-0690">Ribosome biogenesis</keyword>
<keyword id="KW-0694">RNA-binding</keyword>
<keyword id="KW-0699">rRNA-binding</keyword>
<keyword id="KW-0862">Zinc</keyword>
<reference key="1">
    <citation type="journal article" date="2006" name="Genome Res.">
        <title>Skewed genomic variability in strains of the toxigenic bacterial pathogen, Clostridium perfringens.</title>
        <authorList>
            <person name="Myers G.S.A."/>
            <person name="Rasko D.A."/>
            <person name="Cheung J.K."/>
            <person name="Ravel J."/>
            <person name="Seshadri R."/>
            <person name="DeBoy R.T."/>
            <person name="Ren Q."/>
            <person name="Varga J."/>
            <person name="Awad M.M."/>
            <person name="Brinkac L.M."/>
            <person name="Daugherty S.C."/>
            <person name="Haft D.H."/>
            <person name="Dodson R.J."/>
            <person name="Madupu R."/>
            <person name="Nelson W.C."/>
            <person name="Rosovitz M.J."/>
            <person name="Sullivan S.A."/>
            <person name="Khouri H."/>
            <person name="Dimitrov G.I."/>
            <person name="Watkins K.L."/>
            <person name="Mulligan S."/>
            <person name="Benton J."/>
            <person name="Radune D."/>
            <person name="Fisher D.J."/>
            <person name="Atkins H.S."/>
            <person name="Hiscox T."/>
            <person name="Jost B.H."/>
            <person name="Billington S.J."/>
            <person name="Songer J.G."/>
            <person name="McClane B.A."/>
            <person name="Titball R.W."/>
            <person name="Rood J.I."/>
            <person name="Melville S.B."/>
            <person name="Paulsen I.T."/>
        </authorList>
    </citation>
    <scope>NUCLEOTIDE SEQUENCE [LARGE SCALE GENOMIC DNA]</scope>
    <source>
        <strain>SM101 / Type A</strain>
    </source>
</reference>
<name>RSGA_CLOPS</name>
<accession>Q0SS84</accession>
<evidence type="ECO:0000255" key="1">
    <source>
        <dbReference type="HAMAP-Rule" id="MF_01820"/>
    </source>
</evidence>
<evidence type="ECO:0000255" key="2">
    <source>
        <dbReference type="PROSITE-ProRule" id="PRU01058"/>
    </source>
</evidence>
<sequence>MEGIIIKGIGGFYYIKTDEGIIECKARGKFRYNSLKPMVGDRVTIKVENGKGVIEDIHERSSELIRPTVANVTQAFVVFAIKNPDINLDLLNRFLTLCEYNDIHAVVCLNKEDLCTEEEKENLKELINDIGYEVLFINAKEGKGFDALKERLEHNITVLCGPSGAGKSTLLNAFIDREHMETGSVSEKIGRGKHTTRHSELIDVDNGYLVDTPGFTTLDVTFIDRDSLKYCFPEFNDYNNLCKFNGCNHYKEPKCAVKEAVEEGKINKLRYEFYIKTLEEIINRRGN</sequence>
<dbReference type="EC" id="3.6.1.-" evidence="1"/>
<dbReference type="EMBL" id="CP000312">
    <property type="protein sequence ID" value="ABG86394.1"/>
    <property type="molecule type" value="Genomic_DNA"/>
</dbReference>
<dbReference type="RefSeq" id="WP_011592625.1">
    <property type="nucleotide sequence ID" value="NC_008262.1"/>
</dbReference>
<dbReference type="SMR" id="Q0SS84"/>
<dbReference type="KEGG" id="cpr:CPR_1708"/>
<dbReference type="Proteomes" id="UP000001824">
    <property type="component" value="Chromosome"/>
</dbReference>
<dbReference type="GO" id="GO:0005737">
    <property type="term" value="C:cytoplasm"/>
    <property type="evidence" value="ECO:0007669"/>
    <property type="project" value="UniProtKB-SubCell"/>
</dbReference>
<dbReference type="GO" id="GO:0005525">
    <property type="term" value="F:GTP binding"/>
    <property type="evidence" value="ECO:0007669"/>
    <property type="project" value="UniProtKB-UniRule"/>
</dbReference>
<dbReference type="GO" id="GO:0003924">
    <property type="term" value="F:GTPase activity"/>
    <property type="evidence" value="ECO:0007669"/>
    <property type="project" value="UniProtKB-UniRule"/>
</dbReference>
<dbReference type="GO" id="GO:0046872">
    <property type="term" value="F:metal ion binding"/>
    <property type="evidence" value="ECO:0007669"/>
    <property type="project" value="UniProtKB-KW"/>
</dbReference>
<dbReference type="GO" id="GO:0019843">
    <property type="term" value="F:rRNA binding"/>
    <property type="evidence" value="ECO:0007669"/>
    <property type="project" value="UniProtKB-KW"/>
</dbReference>
<dbReference type="GO" id="GO:0042274">
    <property type="term" value="P:ribosomal small subunit biogenesis"/>
    <property type="evidence" value="ECO:0007669"/>
    <property type="project" value="UniProtKB-UniRule"/>
</dbReference>
<dbReference type="CDD" id="cd04466">
    <property type="entry name" value="S1_YloQ_GTPase"/>
    <property type="match status" value="1"/>
</dbReference>
<dbReference type="CDD" id="cd01854">
    <property type="entry name" value="YjeQ_EngC"/>
    <property type="match status" value="1"/>
</dbReference>
<dbReference type="Gene3D" id="2.40.50.140">
    <property type="entry name" value="Nucleic acid-binding proteins"/>
    <property type="match status" value="1"/>
</dbReference>
<dbReference type="Gene3D" id="3.40.50.300">
    <property type="entry name" value="P-loop containing nucleotide triphosphate hydrolases"/>
    <property type="match status" value="1"/>
</dbReference>
<dbReference type="Gene3D" id="1.10.40.50">
    <property type="entry name" value="Probable gtpase engc, domain 3"/>
    <property type="match status" value="1"/>
</dbReference>
<dbReference type="HAMAP" id="MF_01820">
    <property type="entry name" value="GTPase_RsgA"/>
    <property type="match status" value="1"/>
</dbReference>
<dbReference type="InterPro" id="IPR030378">
    <property type="entry name" value="G_CP_dom"/>
</dbReference>
<dbReference type="InterPro" id="IPR012340">
    <property type="entry name" value="NA-bd_OB-fold"/>
</dbReference>
<dbReference type="InterPro" id="IPR027417">
    <property type="entry name" value="P-loop_NTPase"/>
</dbReference>
<dbReference type="InterPro" id="IPR004881">
    <property type="entry name" value="Ribosome_biogen_GTPase_RsgA"/>
</dbReference>
<dbReference type="InterPro" id="IPR010914">
    <property type="entry name" value="RsgA_GTPase_dom"/>
</dbReference>
<dbReference type="InterPro" id="IPR031944">
    <property type="entry name" value="RsgA_N"/>
</dbReference>
<dbReference type="NCBIfam" id="TIGR00157">
    <property type="entry name" value="ribosome small subunit-dependent GTPase A"/>
    <property type="match status" value="1"/>
</dbReference>
<dbReference type="PANTHER" id="PTHR32120">
    <property type="entry name" value="SMALL RIBOSOMAL SUBUNIT BIOGENESIS GTPASE RSGA"/>
    <property type="match status" value="1"/>
</dbReference>
<dbReference type="PANTHER" id="PTHR32120:SF11">
    <property type="entry name" value="SMALL RIBOSOMAL SUBUNIT BIOGENESIS GTPASE RSGA 1, MITOCHONDRIAL-RELATED"/>
    <property type="match status" value="1"/>
</dbReference>
<dbReference type="Pfam" id="PF03193">
    <property type="entry name" value="RsgA_GTPase"/>
    <property type="match status" value="1"/>
</dbReference>
<dbReference type="Pfam" id="PF16745">
    <property type="entry name" value="RsgA_N"/>
    <property type="match status" value="1"/>
</dbReference>
<dbReference type="SUPFAM" id="SSF50249">
    <property type="entry name" value="Nucleic acid-binding proteins"/>
    <property type="match status" value="1"/>
</dbReference>
<dbReference type="SUPFAM" id="SSF52540">
    <property type="entry name" value="P-loop containing nucleoside triphosphate hydrolases"/>
    <property type="match status" value="1"/>
</dbReference>
<dbReference type="PROSITE" id="PS50936">
    <property type="entry name" value="ENGC_GTPASE"/>
    <property type="match status" value="1"/>
</dbReference>
<dbReference type="PROSITE" id="PS51721">
    <property type="entry name" value="G_CP"/>
    <property type="match status" value="1"/>
</dbReference>
<protein>
    <recommendedName>
        <fullName evidence="1">Small ribosomal subunit biogenesis GTPase RsgA</fullName>
        <ecNumber evidence="1">3.6.1.-</ecNumber>
    </recommendedName>
</protein>
<proteinExistence type="inferred from homology"/>
<comment type="function">
    <text evidence="1">One of several proteins that assist in the late maturation steps of the functional core of the 30S ribosomal subunit. Helps release RbfA from mature subunits. May play a role in the assembly of ribosomal proteins into the subunit. Circularly permuted GTPase that catalyzes slow GTP hydrolysis, GTPase activity is stimulated by the 30S ribosomal subunit.</text>
</comment>
<comment type="cofactor">
    <cofactor evidence="1">
        <name>Zn(2+)</name>
        <dbReference type="ChEBI" id="CHEBI:29105"/>
    </cofactor>
    <text evidence="1">Binds 1 zinc ion per subunit.</text>
</comment>
<comment type="subunit">
    <text evidence="1">Monomer. Associates with 30S ribosomal subunit, binds 16S rRNA.</text>
</comment>
<comment type="subcellular location">
    <subcellularLocation>
        <location evidence="1">Cytoplasm</location>
    </subcellularLocation>
</comment>
<comment type="similarity">
    <text evidence="1">Belongs to the TRAFAC class YlqF/YawG GTPase family. RsgA subfamily.</text>
</comment>
<gene>
    <name evidence="1" type="primary">rsgA</name>
    <name type="ordered locus">CPR_1708</name>
</gene>